<evidence type="ECO:0000255" key="1">
    <source>
        <dbReference type="HAMAP-Rule" id="MF_00101"/>
    </source>
</evidence>
<name>ACPS_CAMJ8</name>
<dbReference type="EC" id="2.7.8.7" evidence="1"/>
<dbReference type="EMBL" id="CP000814">
    <property type="protein sequence ID" value="ABV52921.1"/>
    <property type="molecule type" value="Genomic_DNA"/>
</dbReference>
<dbReference type="RefSeq" id="WP_002866684.1">
    <property type="nucleotide sequence ID" value="NC_009839.1"/>
</dbReference>
<dbReference type="SMR" id="A8FN84"/>
<dbReference type="KEGG" id="cju:C8J_1323"/>
<dbReference type="HOGENOM" id="CLU_089696_0_2_7"/>
<dbReference type="GO" id="GO:0005737">
    <property type="term" value="C:cytoplasm"/>
    <property type="evidence" value="ECO:0007669"/>
    <property type="project" value="UniProtKB-SubCell"/>
</dbReference>
<dbReference type="GO" id="GO:0008897">
    <property type="term" value="F:holo-[acyl-carrier-protein] synthase activity"/>
    <property type="evidence" value="ECO:0007669"/>
    <property type="project" value="UniProtKB-UniRule"/>
</dbReference>
<dbReference type="GO" id="GO:0000287">
    <property type="term" value="F:magnesium ion binding"/>
    <property type="evidence" value="ECO:0007669"/>
    <property type="project" value="UniProtKB-UniRule"/>
</dbReference>
<dbReference type="GO" id="GO:0006633">
    <property type="term" value="P:fatty acid biosynthetic process"/>
    <property type="evidence" value="ECO:0007669"/>
    <property type="project" value="UniProtKB-UniRule"/>
</dbReference>
<dbReference type="Gene3D" id="3.90.470.20">
    <property type="entry name" value="4'-phosphopantetheinyl transferase domain"/>
    <property type="match status" value="1"/>
</dbReference>
<dbReference type="HAMAP" id="MF_00101">
    <property type="entry name" value="AcpS"/>
    <property type="match status" value="1"/>
</dbReference>
<dbReference type="InterPro" id="IPR008278">
    <property type="entry name" value="4-PPantetheinyl_Trfase_dom"/>
</dbReference>
<dbReference type="InterPro" id="IPR037143">
    <property type="entry name" value="4-PPantetheinyl_Trfase_dom_sf"/>
</dbReference>
<dbReference type="InterPro" id="IPR002582">
    <property type="entry name" value="ACPS"/>
</dbReference>
<dbReference type="InterPro" id="IPR004568">
    <property type="entry name" value="Ppantetheine-prot_Trfase_dom"/>
</dbReference>
<dbReference type="NCBIfam" id="TIGR00516">
    <property type="entry name" value="acpS"/>
    <property type="match status" value="1"/>
</dbReference>
<dbReference type="NCBIfam" id="TIGR00556">
    <property type="entry name" value="pantethn_trn"/>
    <property type="match status" value="1"/>
</dbReference>
<dbReference type="Pfam" id="PF01648">
    <property type="entry name" value="ACPS"/>
    <property type="match status" value="1"/>
</dbReference>
<dbReference type="SUPFAM" id="SSF56214">
    <property type="entry name" value="4'-phosphopantetheinyl transferase"/>
    <property type="match status" value="1"/>
</dbReference>
<gene>
    <name evidence="1" type="primary">acpS</name>
    <name type="ordered locus">C8J_1323</name>
</gene>
<accession>A8FN84</accession>
<keyword id="KW-0963">Cytoplasm</keyword>
<keyword id="KW-0275">Fatty acid biosynthesis</keyword>
<keyword id="KW-0276">Fatty acid metabolism</keyword>
<keyword id="KW-0444">Lipid biosynthesis</keyword>
<keyword id="KW-0443">Lipid metabolism</keyword>
<keyword id="KW-0460">Magnesium</keyword>
<keyword id="KW-0479">Metal-binding</keyword>
<keyword id="KW-0808">Transferase</keyword>
<protein>
    <recommendedName>
        <fullName evidence="1">Holo-[acyl-carrier-protein] synthase</fullName>
        <shortName evidence="1">Holo-ACP synthase</shortName>
        <ecNumber evidence="1">2.7.8.7</ecNumber>
    </recommendedName>
    <alternativeName>
        <fullName evidence="1">4'-phosphopantetheinyl transferase AcpS</fullName>
    </alternativeName>
</protein>
<comment type="function">
    <text evidence="1">Transfers the 4'-phosphopantetheine moiety from coenzyme A to a Ser of acyl-carrier-protein.</text>
</comment>
<comment type="catalytic activity">
    <reaction evidence="1">
        <text>apo-[ACP] + CoA = holo-[ACP] + adenosine 3',5'-bisphosphate + H(+)</text>
        <dbReference type="Rhea" id="RHEA:12068"/>
        <dbReference type="Rhea" id="RHEA-COMP:9685"/>
        <dbReference type="Rhea" id="RHEA-COMP:9690"/>
        <dbReference type="ChEBI" id="CHEBI:15378"/>
        <dbReference type="ChEBI" id="CHEBI:29999"/>
        <dbReference type="ChEBI" id="CHEBI:57287"/>
        <dbReference type="ChEBI" id="CHEBI:58343"/>
        <dbReference type="ChEBI" id="CHEBI:64479"/>
        <dbReference type="EC" id="2.7.8.7"/>
    </reaction>
</comment>
<comment type="cofactor">
    <cofactor evidence="1">
        <name>Mg(2+)</name>
        <dbReference type="ChEBI" id="CHEBI:18420"/>
    </cofactor>
</comment>
<comment type="subcellular location">
    <subcellularLocation>
        <location evidence="1">Cytoplasm</location>
    </subcellularLocation>
</comment>
<comment type="similarity">
    <text evidence="1">Belongs to the P-Pant transferase superfamily. AcpS family.</text>
</comment>
<reference key="1">
    <citation type="journal article" date="2007" name="J. Bacteriol.">
        <title>The complete genome sequence of Campylobacter jejuni strain 81116 (NCTC11828).</title>
        <authorList>
            <person name="Pearson B.M."/>
            <person name="Gaskin D.J.H."/>
            <person name="Segers R.P.A.M."/>
            <person name="Wells J.M."/>
            <person name="Nuijten P.J.M."/>
            <person name="van Vliet A.H.M."/>
        </authorList>
    </citation>
    <scope>NUCLEOTIDE SEQUENCE [LARGE SCALE GENOMIC DNA]</scope>
    <source>
        <strain>81116 / NCTC 11828</strain>
    </source>
</reference>
<proteinExistence type="inferred from homology"/>
<sequence>MRVGCDIIAISRIEKIHSRHGKNFLDKFLSPKEQILIKNPATLAGLWAAKEAASKALGVGICELCSFFDIEISKDEKNAPKLKYSQKITKNFNITQTSLSISHDNGFAIAIVAIV</sequence>
<feature type="chain" id="PRO_1000071295" description="Holo-[acyl-carrier-protein] synthase">
    <location>
        <begin position="1"/>
        <end position="115"/>
    </location>
</feature>
<feature type="binding site" evidence="1">
    <location>
        <position position="6"/>
    </location>
    <ligand>
        <name>Mg(2+)</name>
        <dbReference type="ChEBI" id="CHEBI:18420"/>
    </ligand>
</feature>
<feature type="binding site" evidence="1">
    <location>
        <position position="51"/>
    </location>
    <ligand>
        <name>Mg(2+)</name>
        <dbReference type="ChEBI" id="CHEBI:18420"/>
    </ligand>
</feature>
<organism>
    <name type="scientific">Campylobacter jejuni subsp. jejuni serotype O:6 (strain 81116 / NCTC 11828)</name>
    <dbReference type="NCBI Taxonomy" id="407148"/>
    <lineage>
        <taxon>Bacteria</taxon>
        <taxon>Pseudomonadati</taxon>
        <taxon>Campylobacterota</taxon>
        <taxon>Epsilonproteobacteria</taxon>
        <taxon>Campylobacterales</taxon>
        <taxon>Campylobacteraceae</taxon>
        <taxon>Campylobacter</taxon>
    </lineage>
</organism>